<keyword id="KW-0156">Chromatin regulator</keyword>
<keyword id="KW-0963">Cytoplasm</keyword>
<keyword id="KW-0217">Developmental protein</keyword>
<keyword id="KW-0539">Nucleus</keyword>
<keyword id="KW-1185">Reference proteome</keyword>
<accession>A2YR10</accession>
<accession>B8BAL4</accession>
<feature type="chain" id="PRO_0000320530" description="Actin-related protein 4">
    <location>
        <begin position="1"/>
        <end position="443"/>
    </location>
</feature>
<feature type="region of interest" description="Disordered" evidence="3">
    <location>
        <begin position="36"/>
        <end position="69"/>
    </location>
</feature>
<feature type="compositionally biased region" description="Basic and acidic residues" evidence="3">
    <location>
        <begin position="47"/>
        <end position="56"/>
    </location>
</feature>
<evidence type="ECO:0000250" key="1"/>
<evidence type="ECO:0000250" key="2">
    <source>
        <dbReference type="UniProtKB" id="Q84M92"/>
    </source>
</evidence>
<evidence type="ECO:0000256" key="3">
    <source>
        <dbReference type="SAM" id="MobiDB-lite"/>
    </source>
</evidence>
<evidence type="ECO:0000305" key="4"/>
<dbReference type="EMBL" id="CM000133">
    <property type="protein sequence ID" value="EEC82868.1"/>
    <property type="molecule type" value="Genomic_DNA"/>
</dbReference>
<dbReference type="SMR" id="A2YR10"/>
<dbReference type="STRING" id="39946.A2YR10"/>
<dbReference type="EnsemblPlants" id="BGIOSGA027954-TA">
    <property type="protein sequence ID" value="BGIOSGA027954-PA"/>
    <property type="gene ID" value="BGIOSGA027954"/>
</dbReference>
<dbReference type="Gramene" id="BGIOSGA027954-TA">
    <property type="protein sequence ID" value="BGIOSGA027954-PA"/>
    <property type="gene ID" value="BGIOSGA027954"/>
</dbReference>
<dbReference type="HOGENOM" id="CLU_027965_6_2_1"/>
<dbReference type="OMA" id="MTEAPWN"/>
<dbReference type="Proteomes" id="UP000007015">
    <property type="component" value="Chromosome 8"/>
</dbReference>
<dbReference type="GO" id="GO:0005737">
    <property type="term" value="C:cytoplasm"/>
    <property type="evidence" value="ECO:0007669"/>
    <property type="project" value="UniProtKB-SubCell"/>
</dbReference>
<dbReference type="GO" id="GO:0005634">
    <property type="term" value="C:nucleus"/>
    <property type="evidence" value="ECO:0007669"/>
    <property type="project" value="UniProtKB-SubCell"/>
</dbReference>
<dbReference type="GO" id="GO:0006325">
    <property type="term" value="P:chromatin organization"/>
    <property type="evidence" value="ECO:0007669"/>
    <property type="project" value="UniProtKB-KW"/>
</dbReference>
<dbReference type="CDD" id="cd13395">
    <property type="entry name" value="ASKHA_NBD_Arp4_ACTL6-like"/>
    <property type="match status" value="1"/>
</dbReference>
<dbReference type="FunFam" id="3.30.420.40:FF:000151">
    <property type="entry name" value="Actin-related protein 4"/>
    <property type="match status" value="1"/>
</dbReference>
<dbReference type="FunFam" id="3.90.640.10:FF:000031">
    <property type="entry name" value="Actin-related protein 4"/>
    <property type="match status" value="1"/>
</dbReference>
<dbReference type="FunFam" id="3.30.420.40:FF:000127">
    <property type="entry name" value="actin-related protein 4"/>
    <property type="match status" value="1"/>
</dbReference>
<dbReference type="Gene3D" id="3.30.420.40">
    <property type="match status" value="3"/>
</dbReference>
<dbReference type="Gene3D" id="3.90.640.10">
    <property type="entry name" value="Actin, Chain A, domain 4"/>
    <property type="match status" value="1"/>
</dbReference>
<dbReference type="InterPro" id="IPR004000">
    <property type="entry name" value="Actin"/>
</dbReference>
<dbReference type="InterPro" id="IPR043129">
    <property type="entry name" value="ATPase_NBD"/>
</dbReference>
<dbReference type="PANTHER" id="PTHR11937">
    <property type="entry name" value="ACTIN"/>
    <property type="match status" value="1"/>
</dbReference>
<dbReference type="Pfam" id="PF00022">
    <property type="entry name" value="Actin"/>
    <property type="match status" value="1"/>
</dbReference>
<dbReference type="SMART" id="SM00268">
    <property type="entry name" value="ACTIN"/>
    <property type="match status" value="1"/>
</dbReference>
<dbReference type="SUPFAM" id="SSF53067">
    <property type="entry name" value="Actin-like ATPase domain"/>
    <property type="match status" value="2"/>
</dbReference>
<comment type="function">
    <text evidence="1">Involved in several developmental processes including organization of plant organs, flowering time, anther development, flower senescence and fertility, probably by regulating the chromatin structure.</text>
</comment>
<comment type="subcellular location">
    <subcellularLocation>
        <location evidence="2">Nucleus</location>
    </subcellularLocation>
    <subcellularLocation>
        <location evidence="2">Cytoplasm</location>
    </subcellularLocation>
</comment>
<comment type="similarity">
    <text evidence="4">Belongs to the actin family. ARP4 subfamily.</text>
</comment>
<name>ARP4_ORYSI</name>
<reference key="1">
    <citation type="journal article" date="2005" name="PLoS Biol.">
        <title>The genomes of Oryza sativa: a history of duplications.</title>
        <authorList>
            <person name="Yu J."/>
            <person name="Wang J."/>
            <person name="Lin W."/>
            <person name="Li S."/>
            <person name="Li H."/>
            <person name="Zhou J."/>
            <person name="Ni P."/>
            <person name="Dong W."/>
            <person name="Hu S."/>
            <person name="Zeng C."/>
            <person name="Zhang J."/>
            <person name="Zhang Y."/>
            <person name="Li R."/>
            <person name="Xu Z."/>
            <person name="Li S."/>
            <person name="Li X."/>
            <person name="Zheng H."/>
            <person name="Cong L."/>
            <person name="Lin L."/>
            <person name="Yin J."/>
            <person name="Geng J."/>
            <person name="Li G."/>
            <person name="Shi J."/>
            <person name="Liu J."/>
            <person name="Lv H."/>
            <person name="Li J."/>
            <person name="Wang J."/>
            <person name="Deng Y."/>
            <person name="Ran L."/>
            <person name="Shi X."/>
            <person name="Wang X."/>
            <person name="Wu Q."/>
            <person name="Li C."/>
            <person name="Ren X."/>
            <person name="Wang J."/>
            <person name="Wang X."/>
            <person name="Li D."/>
            <person name="Liu D."/>
            <person name="Zhang X."/>
            <person name="Ji Z."/>
            <person name="Zhao W."/>
            <person name="Sun Y."/>
            <person name="Zhang Z."/>
            <person name="Bao J."/>
            <person name="Han Y."/>
            <person name="Dong L."/>
            <person name="Ji J."/>
            <person name="Chen P."/>
            <person name="Wu S."/>
            <person name="Liu J."/>
            <person name="Xiao Y."/>
            <person name="Bu D."/>
            <person name="Tan J."/>
            <person name="Yang L."/>
            <person name="Ye C."/>
            <person name="Zhang J."/>
            <person name="Xu J."/>
            <person name="Zhou Y."/>
            <person name="Yu Y."/>
            <person name="Zhang B."/>
            <person name="Zhuang S."/>
            <person name="Wei H."/>
            <person name="Liu B."/>
            <person name="Lei M."/>
            <person name="Yu H."/>
            <person name="Li Y."/>
            <person name="Xu H."/>
            <person name="Wei S."/>
            <person name="He X."/>
            <person name="Fang L."/>
            <person name="Zhang Z."/>
            <person name="Zhang Y."/>
            <person name="Huang X."/>
            <person name="Su Z."/>
            <person name="Tong W."/>
            <person name="Li J."/>
            <person name="Tong Z."/>
            <person name="Li S."/>
            <person name="Ye J."/>
            <person name="Wang L."/>
            <person name="Fang L."/>
            <person name="Lei T."/>
            <person name="Chen C.-S."/>
            <person name="Chen H.-C."/>
            <person name="Xu Z."/>
            <person name="Li H."/>
            <person name="Huang H."/>
            <person name="Zhang F."/>
            <person name="Xu H."/>
            <person name="Li N."/>
            <person name="Zhao C."/>
            <person name="Li S."/>
            <person name="Dong L."/>
            <person name="Huang Y."/>
            <person name="Li L."/>
            <person name="Xi Y."/>
            <person name="Qi Q."/>
            <person name="Li W."/>
            <person name="Zhang B."/>
            <person name="Hu W."/>
            <person name="Zhang Y."/>
            <person name="Tian X."/>
            <person name="Jiao Y."/>
            <person name="Liang X."/>
            <person name="Jin J."/>
            <person name="Gao L."/>
            <person name="Zheng W."/>
            <person name="Hao B."/>
            <person name="Liu S.-M."/>
            <person name="Wang W."/>
            <person name="Yuan L."/>
            <person name="Cao M."/>
            <person name="McDermott J."/>
            <person name="Samudrala R."/>
            <person name="Wang J."/>
            <person name="Wong G.K.-S."/>
            <person name="Yang H."/>
        </authorList>
    </citation>
    <scope>NUCLEOTIDE SEQUENCE [LARGE SCALE GENOMIC DNA]</scope>
    <source>
        <strain>cv. 93-11</strain>
    </source>
</reference>
<reference key="2">
    <citation type="journal article" date="2004" name="Trends Plant Sci.">
        <title>Plant actin-related proteins.</title>
        <authorList>
            <person name="Kandasamy M.K."/>
            <person name="Deal R.B."/>
            <person name="McKinney E.C."/>
            <person name="Meagher R.B."/>
        </authorList>
    </citation>
    <scope>REVIEW</scope>
    <scope>GENE FAMILY</scope>
    <scope>NOMENCLATURE</scope>
</reference>
<sequence length="443" mass="48494">MYGGDEVSAIVIDVGSYSCKAGYAGDDTPKAVFPSVVGSIEQTGETDEAKADKEAEAASDSKNGAKPMDVDKAKTKRKLYVGQELEFRRDHMEVISPMKDGTVTDWDIVDNIWNHAFRQRLLINPEEHPMLIAEPSTNTGQQREKAAELMFEKYKVPALFLAKNAVLTSFASGRATSLVVDSGGGSTVVAAVHDGYVLQKSVATSPIGGEFLTDCMMKSLESKGVVIRPRYSFKKKEVGPGEYKVVDLDLPNTTESYKLYCMRAIASDIKESVCRVPDTAFDEVAYANVPTTSYELPDGQTIEVGADRFKIPDILFNPSLSQTIPGVDGFADSMSVRGLPRMVIDSVNRCDVDIRKELLSSILLSGGSSSILQLKERLEKEVLEESSGNTRVKVLASGNSVERRFSVWIGGSILASLGSFQQMWFSKAEYEEHGVSYIQRKCP</sequence>
<protein>
    <recommendedName>
        <fullName>Actin-related protein 4</fullName>
    </recommendedName>
</protein>
<organism>
    <name type="scientific">Oryza sativa subsp. indica</name>
    <name type="common">Rice</name>
    <dbReference type="NCBI Taxonomy" id="39946"/>
    <lineage>
        <taxon>Eukaryota</taxon>
        <taxon>Viridiplantae</taxon>
        <taxon>Streptophyta</taxon>
        <taxon>Embryophyta</taxon>
        <taxon>Tracheophyta</taxon>
        <taxon>Spermatophyta</taxon>
        <taxon>Magnoliopsida</taxon>
        <taxon>Liliopsida</taxon>
        <taxon>Poales</taxon>
        <taxon>Poaceae</taxon>
        <taxon>BOP clade</taxon>
        <taxon>Oryzoideae</taxon>
        <taxon>Oryzeae</taxon>
        <taxon>Oryzinae</taxon>
        <taxon>Oryza</taxon>
        <taxon>Oryza sativa</taxon>
    </lineage>
</organism>
<proteinExistence type="inferred from homology"/>
<gene>
    <name type="primary">ARP4</name>
    <name type="ORF">OsI_27738</name>
</gene>